<gene>
    <name evidence="1" type="primary">rpmD</name>
    <name type="ordered locus">MT0747</name>
</gene>
<name>RL30_MYCTO</name>
<keyword id="KW-1185">Reference proteome</keyword>
<keyword id="KW-0687">Ribonucleoprotein</keyword>
<keyword id="KW-0689">Ribosomal protein</keyword>
<feature type="chain" id="PRO_0000428222" description="Large ribosomal subunit protein uL30">
    <location>
        <begin position="1"/>
        <end position="65"/>
    </location>
</feature>
<evidence type="ECO:0000255" key="1">
    <source>
        <dbReference type="HAMAP-Rule" id="MF_01371"/>
    </source>
</evidence>
<evidence type="ECO:0000305" key="2"/>
<proteinExistence type="inferred from homology"/>
<protein>
    <recommendedName>
        <fullName evidence="1">Large ribosomal subunit protein uL30</fullName>
    </recommendedName>
    <alternativeName>
        <fullName evidence="2">50S ribosomal protein L30</fullName>
    </alternativeName>
</protein>
<dbReference type="EMBL" id="AE000516">
    <property type="protein sequence ID" value="AAK44981.1"/>
    <property type="molecule type" value="Genomic_DNA"/>
</dbReference>
<dbReference type="PIR" id="E70644">
    <property type="entry name" value="E70644"/>
</dbReference>
<dbReference type="RefSeq" id="WP_003403683.1">
    <property type="nucleotide sequence ID" value="NZ_KK341227.1"/>
</dbReference>
<dbReference type="SMR" id="P9WHA2"/>
<dbReference type="GeneID" id="45424687"/>
<dbReference type="KEGG" id="mtc:MT0747"/>
<dbReference type="PATRIC" id="fig|83331.31.peg.800"/>
<dbReference type="HOGENOM" id="CLU_131047_2_0_11"/>
<dbReference type="Proteomes" id="UP000001020">
    <property type="component" value="Chromosome"/>
</dbReference>
<dbReference type="GO" id="GO:0022625">
    <property type="term" value="C:cytosolic large ribosomal subunit"/>
    <property type="evidence" value="ECO:0007669"/>
    <property type="project" value="TreeGrafter"/>
</dbReference>
<dbReference type="GO" id="GO:0003735">
    <property type="term" value="F:structural constituent of ribosome"/>
    <property type="evidence" value="ECO:0007669"/>
    <property type="project" value="InterPro"/>
</dbReference>
<dbReference type="GO" id="GO:0006412">
    <property type="term" value="P:translation"/>
    <property type="evidence" value="ECO:0007669"/>
    <property type="project" value="UniProtKB-UniRule"/>
</dbReference>
<dbReference type="CDD" id="cd01658">
    <property type="entry name" value="Ribosomal_L30"/>
    <property type="match status" value="1"/>
</dbReference>
<dbReference type="FunFam" id="3.30.1390.20:FF:000001">
    <property type="entry name" value="50S ribosomal protein L30"/>
    <property type="match status" value="1"/>
</dbReference>
<dbReference type="Gene3D" id="3.30.1390.20">
    <property type="entry name" value="Ribosomal protein L30, ferredoxin-like fold domain"/>
    <property type="match status" value="1"/>
</dbReference>
<dbReference type="HAMAP" id="MF_01371_B">
    <property type="entry name" value="Ribosomal_uL30_B"/>
    <property type="match status" value="1"/>
</dbReference>
<dbReference type="InterPro" id="IPR036919">
    <property type="entry name" value="Ribo_uL30_ferredoxin-like_sf"/>
</dbReference>
<dbReference type="InterPro" id="IPR005996">
    <property type="entry name" value="Ribosomal_uL30_bac-type"/>
</dbReference>
<dbReference type="InterPro" id="IPR018038">
    <property type="entry name" value="Ribosomal_uL30_CS"/>
</dbReference>
<dbReference type="InterPro" id="IPR016082">
    <property type="entry name" value="Ribosomal_uL30_ferredoxin-like"/>
</dbReference>
<dbReference type="NCBIfam" id="TIGR01308">
    <property type="entry name" value="rpmD_bact"/>
    <property type="match status" value="1"/>
</dbReference>
<dbReference type="PANTHER" id="PTHR15892:SF2">
    <property type="entry name" value="LARGE RIBOSOMAL SUBUNIT PROTEIN UL30M"/>
    <property type="match status" value="1"/>
</dbReference>
<dbReference type="PANTHER" id="PTHR15892">
    <property type="entry name" value="MITOCHONDRIAL RIBOSOMAL PROTEIN L30"/>
    <property type="match status" value="1"/>
</dbReference>
<dbReference type="Pfam" id="PF00327">
    <property type="entry name" value="Ribosomal_L30"/>
    <property type="match status" value="1"/>
</dbReference>
<dbReference type="PIRSF" id="PIRSF002211">
    <property type="entry name" value="Ribosomal_L30_bac-type"/>
    <property type="match status" value="1"/>
</dbReference>
<dbReference type="SUPFAM" id="SSF55129">
    <property type="entry name" value="Ribosomal protein L30p/L7e"/>
    <property type="match status" value="1"/>
</dbReference>
<dbReference type="PROSITE" id="PS00634">
    <property type="entry name" value="RIBOSOMAL_L30"/>
    <property type="match status" value="1"/>
</dbReference>
<sequence>MSQLKITQVRSTIGARWKQRESLRTLGLRRIRHSVIREDNAATRGLIAVVRHLVEVEPAQTGGKT</sequence>
<accession>P9WHA2</accession>
<accession>L0T4N7</accession>
<accession>P66181</accession>
<accession>P95070</accession>
<comment type="subunit">
    <text evidence="1">Part of the 50S ribosomal subunit.</text>
</comment>
<comment type="similarity">
    <text evidence="1">Belongs to the universal ribosomal protein uL30 family.</text>
</comment>
<reference key="1">
    <citation type="journal article" date="2002" name="J. Bacteriol.">
        <title>Whole-genome comparison of Mycobacterium tuberculosis clinical and laboratory strains.</title>
        <authorList>
            <person name="Fleischmann R.D."/>
            <person name="Alland D."/>
            <person name="Eisen J.A."/>
            <person name="Carpenter L."/>
            <person name="White O."/>
            <person name="Peterson J.D."/>
            <person name="DeBoy R.T."/>
            <person name="Dodson R.J."/>
            <person name="Gwinn M.L."/>
            <person name="Haft D.H."/>
            <person name="Hickey E.K."/>
            <person name="Kolonay J.F."/>
            <person name="Nelson W.C."/>
            <person name="Umayam L.A."/>
            <person name="Ermolaeva M.D."/>
            <person name="Salzberg S.L."/>
            <person name="Delcher A."/>
            <person name="Utterback T.R."/>
            <person name="Weidman J.F."/>
            <person name="Khouri H.M."/>
            <person name="Gill J."/>
            <person name="Mikula A."/>
            <person name="Bishai W."/>
            <person name="Jacobs W.R. Jr."/>
            <person name="Venter J.C."/>
            <person name="Fraser C.M."/>
        </authorList>
    </citation>
    <scope>NUCLEOTIDE SEQUENCE [LARGE SCALE GENOMIC DNA]</scope>
    <source>
        <strain>CDC 1551 / Oshkosh</strain>
    </source>
</reference>
<organism>
    <name type="scientific">Mycobacterium tuberculosis (strain CDC 1551 / Oshkosh)</name>
    <dbReference type="NCBI Taxonomy" id="83331"/>
    <lineage>
        <taxon>Bacteria</taxon>
        <taxon>Bacillati</taxon>
        <taxon>Actinomycetota</taxon>
        <taxon>Actinomycetes</taxon>
        <taxon>Mycobacteriales</taxon>
        <taxon>Mycobacteriaceae</taxon>
        <taxon>Mycobacterium</taxon>
        <taxon>Mycobacterium tuberculosis complex</taxon>
    </lineage>
</organism>